<comment type="function">
    <text evidence="1">Involved in mRNA degradation. Catalyzes the phosphorolysis of single-stranded polyribonucleotides processively in the 3'- to 5'-direction.</text>
</comment>
<comment type="catalytic activity">
    <reaction evidence="1">
        <text>RNA(n+1) + phosphate = RNA(n) + a ribonucleoside 5'-diphosphate</text>
        <dbReference type="Rhea" id="RHEA:22096"/>
        <dbReference type="Rhea" id="RHEA-COMP:14527"/>
        <dbReference type="Rhea" id="RHEA-COMP:17342"/>
        <dbReference type="ChEBI" id="CHEBI:43474"/>
        <dbReference type="ChEBI" id="CHEBI:57930"/>
        <dbReference type="ChEBI" id="CHEBI:140395"/>
        <dbReference type="EC" id="2.7.7.8"/>
    </reaction>
</comment>
<comment type="cofactor">
    <cofactor evidence="1">
        <name>Mg(2+)</name>
        <dbReference type="ChEBI" id="CHEBI:18420"/>
    </cofactor>
</comment>
<comment type="subcellular location">
    <subcellularLocation>
        <location evidence="1">Cytoplasm</location>
    </subcellularLocation>
</comment>
<comment type="similarity">
    <text evidence="1">Belongs to the polyribonucleotide nucleotidyltransferase family.</text>
</comment>
<organism>
    <name type="scientific">Neisseria gonorrhoeae (strain NCCP11945)</name>
    <dbReference type="NCBI Taxonomy" id="521006"/>
    <lineage>
        <taxon>Bacteria</taxon>
        <taxon>Pseudomonadati</taxon>
        <taxon>Pseudomonadota</taxon>
        <taxon>Betaproteobacteria</taxon>
        <taxon>Neisseriales</taxon>
        <taxon>Neisseriaceae</taxon>
        <taxon>Neisseria</taxon>
    </lineage>
</organism>
<feature type="chain" id="PRO_1000192475" description="Polyribonucleotide nucleotidyltransferase">
    <location>
        <begin position="1"/>
        <end position="706"/>
    </location>
</feature>
<feature type="domain" description="KH" evidence="1">
    <location>
        <begin position="553"/>
        <end position="612"/>
    </location>
</feature>
<feature type="domain" description="S1 motif" evidence="1">
    <location>
        <begin position="622"/>
        <end position="692"/>
    </location>
</feature>
<feature type="binding site" evidence="1">
    <location>
        <position position="487"/>
    </location>
    <ligand>
        <name>Mg(2+)</name>
        <dbReference type="ChEBI" id="CHEBI:18420"/>
    </ligand>
</feature>
<feature type="binding site" evidence="1">
    <location>
        <position position="493"/>
    </location>
    <ligand>
        <name>Mg(2+)</name>
        <dbReference type="ChEBI" id="CHEBI:18420"/>
    </ligand>
</feature>
<dbReference type="EC" id="2.7.7.8" evidence="1"/>
<dbReference type="EMBL" id="CP001050">
    <property type="protein sequence ID" value="ACF29180.1"/>
    <property type="molecule type" value="Genomic_DNA"/>
</dbReference>
<dbReference type="SMR" id="B4RK29"/>
<dbReference type="KEGG" id="ngk:NGK_0489"/>
<dbReference type="HOGENOM" id="CLU_004217_2_2_4"/>
<dbReference type="Proteomes" id="UP000002564">
    <property type="component" value="Chromosome"/>
</dbReference>
<dbReference type="GO" id="GO:0005829">
    <property type="term" value="C:cytosol"/>
    <property type="evidence" value="ECO:0007669"/>
    <property type="project" value="TreeGrafter"/>
</dbReference>
<dbReference type="GO" id="GO:0000175">
    <property type="term" value="F:3'-5'-RNA exonuclease activity"/>
    <property type="evidence" value="ECO:0007669"/>
    <property type="project" value="TreeGrafter"/>
</dbReference>
<dbReference type="GO" id="GO:0000287">
    <property type="term" value="F:magnesium ion binding"/>
    <property type="evidence" value="ECO:0007669"/>
    <property type="project" value="UniProtKB-UniRule"/>
</dbReference>
<dbReference type="GO" id="GO:0004654">
    <property type="term" value="F:polyribonucleotide nucleotidyltransferase activity"/>
    <property type="evidence" value="ECO:0007669"/>
    <property type="project" value="UniProtKB-UniRule"/>
</dbReference>
<dbReference type="GO" id="GO:0003723">
    <property type="term" value="F:RNA binding"/>
    <property type="evidence" value="ECO:0007669"/>
    <property type="project" value="UniProtKB-UniRule"/>
</dbReference>
<dbReference type="GO" id="GO:0006402">
    <property type="term" value="P:mRNA catabolic process"/>
    <property type="evidence" value="ECO:0007669"/>
    <property type="project" value="UniProtKB-UniRule"/>
</dbReference>
<dbReference type="GO" id="GO:0006396">
    <property type="term" value="P:RNA processing"/>
    <property type="evidence" value="ECO:0007669"/>
    <property type="project" value="InterPro"/>
</dbReference>
<dbReference type="CDD" id="cd02393">
    <property type="entry name" value="KH-I_PNPase"/>
    <property type="match status" value="1"/>
</dbReference>
<dbReference type="CDD" id="cd11363">
    <property type="entry name" value="RNase_PH_PNPase_1"/>
    <property type="match status" value="1"/>
</dbReference>
<dbReference type="CDD" id="cd11364">
    <property type="entry name" value="RNase_PH_PNPase_2"/>
    <property type="match status" value="1"/>
</dbReference>
<dbReference type="CDD" id="cd04472">
    <property type="entry name" value="S1_PNPase"/>
    <property type="match status" value="1"/>
</dbReference>
<dbReference type="FunFam" id="3.30.1370.10:FF:000001">
    <property type="entry name" value="Polyribonucleotide nucleotidyltransferase"/>
    <property type="match status" value="1"/>
</dbReference>
<dbReference type="FunFam" id="3.30.230.70:FF:000001">
    <property type="entry name" value="Polyribonucleotide nucleotidyltransferase"/>
    <property type="match status" value="1"/>
</dbReference>
<dbReference type="FunFam" id="3.30.230.70:FF:000002">
    <property type="entry name" value="Polyribonucleotide nucleotidyltransferase"/>
    <property type="match status" value="1"/>
</dbReference>
<dbReference type="Gene3D" id="3.30.230.70">
    <property type="entry name" value="GHMP Kinase, N-terminal domain"/>
    <property type="match status" value="2"/>
</dbReference>
<dbReference type="Gene3D" id="3.30.1370.10">
    <property type="entry name" value="K Homology domain, type 1"/>
    <property type="match status" value="1"/>
</dbReference>
<dbReference type="Gene3D" id="2.40.50.140">
    <property type="entry name" value="Nucleic acid-binding proteins"/>
    <property type="match status" value="1"/>
</dbReference>
<dbReference type="HAMAP" id="MF_01595">
    <property type="entry name" value="PNPase"/>
    <property type="match status" value="1"/>
</dbReference>
<dbReference type="InterPro" id="IPR001247">
    <property type="entry name" value="ExoRNase_PH_dom1"/>
</dbReference>
<dbReference type="InterPro" id="IPR015847">
    <property type="entry name" value="ExoRNase_PH_dom2"/>
</dbReference>
<dbReference type="InterPro" id="IPR036345">
    <property type="entry name" value="ExoRNase_PH_dom2_sf"/>
</dbReference>
<dbReference type="InterPro" id="IPR004087">
    <property type="entry name" value="KH_dom"/>
</dbReference>
<dbReference type="InterPro" id="IPR004088">
    <property type="entry name" value="KH_dom_type_1"/>
</dbReference>
<dbReference type="InterPro" id="IPR036612">
    <property type="entry name" value="KH_dom_type_1_sf"/>
</dbReference>
<dbReference type="InterPro" id="IPR012340">
    <property type="entry name" value="NA-bd_OB-fold"/>
</dbReference>
<dbReference type="InterPro" id="IPR012162">
    <property type="entry name" value="PNPase"/>
</dbReference>
<dbReference type="InterPro" id="IPR027408">
    <property type="entry name" value="PNPase/RNase_PH_dom_sf"/>
</dbReference>
<dbReference type="InterPro" id="IPR015848">
    <property type="entry name" value="PNPase_PH_RNA-bd_bac/org-type"/>
</dbReference>
<dbReference type="InterPro" id="IPR020568">
    <property type="entry name" value="Ribosomal_Su5_D2-typ_SF"/>
</dbReference>
<dbReference type="InterPro" id="IPR003029">
    <property type="entry name" value="S1_domain"/>
</dbReference>
<dbReference type="NCBIfam" id="TIGR03591">
    <property type="entry name" value="polynuc_phos"/>
    <property type="match status" value="1"/>
</dbReference>
<dbReference type="NCBIfam" id="NF008805">
    <property type="entry name" value="PRK11824.1"/>
    <property type="match status" value="1"/>
</dbReference>
<dbReference type="PANTHER" id="PTHR11252">
    <property type="entry name" value="POLYRIBONUCLEOTIDE NUCLEOTIDYLTRANSFERASE"/>
    <property type="match status" value="1"/>
</dbReference>
<dbReference type="PANTHER" id="PTHR11252:SF0">
    <property type="entry name" value="POLYRIBONUCLEOTIDE NUCLEOTIDYLTRANSFERASE 1, MITOCHONDRIAL"/>
    <property type="match status" value="1"/>
</dbReference>
<dbReference type="Pfam" id="PF00013">
    <property type="entry name" value="KH_1"/>
    <property type="match status" value="1"/>
</dbReference>
<dbReference type="Pfam" id="PF03726">
    <property type="entry name" value="PNPase"/>
    <property type="match status" value="1"/>
</dbReference>
<dbReference type="Pfam" id="PF01138">
    <property type="entry name" value="RNase_PH"/>
    <property type="match status" value="2"/>
</dbReference>
<dbReference type="Pfam" id="PF03725">
    <property type="entry name" value="RNase_PH_C"/>
    <property type="match status" value="2"/>
</dbReference>
<dbReference type="Pfam" id="PF00575">
    <property type="entry name" value="S1"/>
    <property type="match status" value="1"/>
</dbReference>
<dbReference type="PIRSF" id="PIRSF005499">
    <property type="entry name" value="PNPase"/>
    <property type="match status" value="1"/>
</dbReference>
<dbReference type="SMART" id="SM00322">
    <property type="entry name" value="KH"/>
    <property type="match status" value="1"/>
</dbReference>
<dbReference type="SMART" id="SM00316">
    <property type="entry name" value="S1"/>
    <property type="match status" value="1"/>
</dbReference>
<dbReference type="SUPFAM" id="SSF54791">
    <property type="entry name" value="Eukaryotic type KH-domain (KH-domain type I)"/>
    <property type="match status" value="1"/>
</dbReference>
<dbReference type="SUPFAM" id="SSF50249">
    <property type="entry name" value="Nucleic acid-binding proteins"/>
    <property type="match status" value="1"/>
</dbReference>
<dbReference type="SUPFAM" id="SSF55666">
    <property type="entry name" value="Ribonuclease PH domain 2-like"/>
    <property type="match status" value="2"/>
</dbReference>
<dbReference type="SUPFAM" id="SSF54211">
    <property type="entry name" value="Ribosomal protein S5 domain 2-like"/>
    <property type="match status" value="2"/>
</dbReference>
<dbReference type="PROSITE" id="PS50084">
    <property type="entry name" value="KH_TYPE_1"/>
    <property type="match status" value="1"/>
</dbReference>
<dbReference type="PROSITE" id="PS50126">
    <property type="entry name" value="S1"/>
    <property type="match status" value="1"/>
</dbReference>
<name>PNP_NEIG2</name>
<proteinExistence type="inferred from homology"/>
<protein>
    <recommendedName>
        <fullName evidence="1">Polyribonucleotide nucleotidyltransferase</fullName>
        <ecNumber evidence="1">2.7.7.8</ecNumber>
    </recommendedName>
    <alternativeName>
        <fullName evidence="1">Polynucleotide phosphorylase</fullName>
        <shortName evidence="1">PNPase</shortName>
    </alternativeName>
</protein>
<sequence>MFNKYVKTFQYGNQTVTLETGEIARQAAAAVKVSMGDTVVFVAVTTNKEVKEGQDFFPLAVDYLERTYAAGKIPGGFFKREGKQSEKEILTSRLIDRPIRPLFPEGFYHDIQIVAMVVSVDPEIDSDIPAMLGASAALVLSGVPFAGPIGAARVGYINGVYVLNPTKAELAKSQLDLVVAGTSKAVLMVESEAKILPEDVMLGAVVYGHDQMQVAINAINEFADEVNPEVWDWKAPETNEELVAKVRGIAGETIKEAFKIRQKQARSAKLDEAWNAVKEALITEETDTLAANEIKGIFKRLEADVVRSQILDGQPRIDGRDTRTVRPLNIQTGVLPRTHGSALFTRGETQALAVATLGTSRDEQIIDALSGEYTDRFMLHYNFPPYSTGEVGRMGAPKRREIGHGRLAKRALLAVLPKPEDFSYTMRVVSEITESNGSSSMASVCGGCLSLLSAGVPLKAHVAGIAMGLILEGNKFAVLTDILGDEDHLGDMDFKVAGTTEGVTALQMDIKIQGITKEIMQIALAQAKEARLHILDQMKAAVAGPQELSAHAPRLFTMKISQDKIRDVIGKGGETIRSITAETGTEINIAEDGTITIAATTQEAGDAAKKRIEEITAEVEVGKVYEGTVVKILDNNVGAIVSVMPGKDGLVHISQIAHERVRNVGDYLQVGQVVNVKALEVDDRGRVRLSIKALLDAPVREENAAE</sequence>
<reference key="1">
    <citation type="journal article" date="2008" name="J. Bacteriol.">
        <title>Complete genome sequence of Neisseria gonorrhoeae NCCP11945.</title>
        <authorList>
            <person name="Chung G.T."/>
            <person name="Yoo J.S."/>
            <person name="Oh H.B."/>
            <person name="Lee Y.S."/>
            <person name="Cha S.H."/>
            <person name="Kim S.J."/>
            <person name="Yoo C.K."/>
        </authorList>
    </citation>
    <scope>NUCLEOTIDE SEQUENCE [LARGE SCALE GENOMIC DNA]</scope>
    <source>
        <strain>NCCP11945</strain>
    </source>
</reference>
<accession>B4RK29</accession>
<evidence type="ECO:0000255" key="1">
    <source>
        <dbReference type="HAMAP-Rule" id="MF_01595"/>
    </source>
</evidence>
<keyword id="KW-0963">Cytoplasm</keyword>
<keyword id="KW-0460">Magnesium</keyword>
<keyword id="KW-0479">Metal-binding</keyword>
<keyword id="KW-0548">Nucleotidyltransferase</keyword>
<keyword id="KW-0694">RNA-binding</keyword>
<keyword id="KW-0808">Transferase</keyword>
<gene>
    <name evidence="1" type="primary">pnp</name>
    <name type="ordered locus">NGK_0489</name>
</gene>